<feature type="chain" id="PRO_1000020764" description="Glycerol kinase">
    <location>
        <begin position="1"/>
        <end position="507"/>
    </location>
</feature>
<feature type="binding site" evidence="1">
    <location>
        <position position="14"/>
    </location>
    <ligand>
        <name>ADP</name>
        <dbReference type="ChEBI" id="CHEBI:456216"/>
    </ligand>
</feature>
<feature type="binding site" evidence="1">
    <location>
        <position position="14"/>
    </location>
    <ligand>
        <name>ATP</name>
        <dbReference type="ChEBI" id="CHEBI:30616"/>
    </ligand>
</feature>
<feature type="binding site" evidence="1">
    <location>
        <position position="14"/>
    </location>
    <ligand>
        <name>sn-glycerol 3-phosphate</name>
        <dbReference type="ChEBI" id="CHEBI:57597"/>
    </ligand>
</feature>
<feature type="binding site" evidence="1">
    <location>
        <position position="15"/>
    </location>
    <ligand>
        <name>ATP</name>
        <dbReference type="ChEBI" id="CHEBI:30616"/>
    </ligand>
</feature>
<feature type="binding site" evidence="1">
    <location>
        <position position="16"/>
    </location>
    <ligand>
        <name>ATP</name>
        <dbReference type="ChEBI" id="CHEBI:30616"/>
    </ligand>
</feature>
<feature type="binding site" evidence="1">
    <location>
        <position position="18"/>
    </location>
    <ligand>
        <name>ADP</name>
        <dbReference type="ChEBI" id="CHEBI:456216"/>
    </ligand>
</feature>
<feature type="binding site" evidence="1">
    <location>
        <position position="84"/>
    </location>
    <ligand>
        <name>glycerol</name>
        <dbReference type="ChEBI" id="CHEBI:17754"/>
    </ligand>
</feature>
<feature type="binding site" evidence="1">
    <location>
        <position position="84"/>
    </location>
    <ligand>
        <name>sn-glycerol 3-phosphate</name>
        <dbReference type="ChEBI" id="CHEBI:57597"/>
    </ligand>
</feature>
<feature type="binding site" evidence="1">
    <location>
        <position position="85"/>
    </location>
    <ligand>
        <name>glycerol</name>
        <dbReference type="ChEBI" id="CHEBI:17754"/>
    </ligand>
</feature>
<feature type="binding site" evidence="1">
    <location>
        <position position="85"/>
    </location>
    <ligand>
        <name>sn-glycerol 3-phosphate</name>
        <dbReference type="ChEBI" id="CHEBI:57597"/>
    </ligand>
</feature>
<feature type="binding site" evidence="1">
    <location>
        <position position="137"/>
    </location>
    <ligand>
        <name>glycerol</name>
        <dbReference type="ChEBI" id="CHEBI:17754"/>
    </ligand>
</feature>
<feature type="binding site" evidence="1">
    <location>
        <position position="137"/>
    </location>
    <ligand>
        <name>sn-glycerol 3-phosphate</name>
        <dbReference type="ChEBI" id="CHEBI:57597"/>
    </ligand>
</feature>
<feature type="binding site" evidence="1">
    <location>
        <position position="247"/>
    </location>
    <ligand>
        <name>glycerol</name>
        <dbReference type="ChEBI" id="CHEBI:17754"/>
    </ligand>
</feature>
<feature type="binding site" evidence="1">
    <location>
        <position position="247"/>
    </location>
    <ligand>
        <name>sn-glycerol 3-phosphate</name>
        <dbReference type="ChEBI" id="CHEBI:57597"/>
    </ligand>
</feature>
<feature type="binding site" evidence="1">
    <location>
        <position position="248"/>
    </location>
    <ligand>
        <name>glycerol</name>
        <dbReference type="ChEBI" id="CHEBI:17754"/>
    </ligand>
</feature>
<feature type="binding site" evidence="1">
    <location>
        <position position="269"/>
    </location>
    <ligand>
        <name>ADP</name>
        <dbReference type="ChEBI" id="CHEBI:456216"/>
    </ligand>
</feature>
<feature type="binding site" evidence="1">
    <location>
        <position position="269"/>
    </location>
    <ligand>
        <name>ATP</name>
        <dbReference type="ChEBI" id="CHEBI:30616"/>
    </ligand>
</feature>
<feature type="binding site" evidence="1">
    <location>
        <position position="312"/>
    </location>
    <ligand>
        <name>ADP</name>
        <dbReference type="ChEBI" id="CHEBI:456216"/>
    </ligand>
</feature>
<feature type="binding site" evidence="1">
    <location>
        <position position="312"/>
    </location>
    <ligand>
        <name>ATP</name>
        <dbReference type="ChEBI" id="CHEBI:30616"/>
    </ligand>
</feature>
<feature type="binding site" evidence="1">
    <location>
        <position position="316"/>
    </location>
    <ligand>
        <name>ATP</name>
        <dbReference type="ChEBI" id="CHEBI:30616"/>
    </ligand>
</feature>
<feature type="binding site" evidence="1">
    <location>
        <position position="413"/>
    </location>
    <ligand>
        <name>ADP</name>
        <dbReference type="ChEBI" id="CHEBI:456216"/>
    </ligand>
</feature>
<feature type="binding site" evidence="1">
    <location>
        <position position="413"/>
    </location>
    <ligand>
        <name>ATP</name>
        <dbReference type="ChEBI" id="CHEBI:30616"/>
    </ligand>
</feature>
<feature type="binding site" evidence="1">
    <location>
        <position position="417"/>
    </location>
    <ligand>
        <name>ADP</name>
        <dbReference type="ChEBI" id="CHEBI:456216"/>
    </ligand>
</feature>
<evidence type="ECO:0000255" key="1">
    <source>
        <dbReference type="HAMAP-Rule" id="MF_00186"/>
    </source>
</evidence>
<proteinExistence type="inferred from homology"/>
<gene>
    <name evidence="1" type="primary">glpK</name>
    <name type="ordered locus">Ping_3168</name>
</gene>
<comment type="function">
    <text evidence="1">Key enzyme in the regulation of glycerol uptake and metabolism. Catalyzes the phosphorylation of glycerol to yield sn-glycerol 3-phosphate.</text>
</comment>
<comment type="catalytic activity">
    <reaction evidence="1">
        <text>glycerol + ATP = sn-glycerol 3-phosphate + ADP + H(+)</text>
        <dbReference type="Rhea" id="RHEA:21644"/>
        <dbReference type="ChEBI" id="CHEBI:15378"/>
        <dbReference type="ChEBI" id="CHEBI:17754"/>
        <dbReference type="ChEBI" id="CHEBI:30616"/>
        <dbReference type="ChEBI" id="CHEBI:57597"/>
        <dbReference type="ChEBI" id="CHEBI:456216"/>
        <dbReference type="EC" id="2.7.1.30"/>
    </reaction>
</comment>
<comment type="activity regulation">
    <text evidence="1">Inhibited by fructose 1,6-bisphosphate (FBP).</text>
</comment>
<comment type="pathway">
    <text evidence="1">Polyol metabolism; glycerol degradation via glycerol kinase pathway; sn-glycerol 3-phosphate from glycerol: step 1/1.</text>
</comment>
<comment type="similarity">
    <text evidence="1">Belongs to the FGGY kinase family.</text>
</comment>
<organism>
    <name type="scientific">Psychromonas ingrahamii (strain DSM 17664 / CCUG 51855 / 37)</name>
    <dbReference type="NCBI Taxonomy" id="357804"/>
    <lineage>
        <taxon>Bacteria</taxon>
        <taxon>Pseudomonadati</taxon>
        <taxon>Pseudomonadota</taxon>
        <taxon>Gammaproteobacteria</taxon>
        <taxon>Alteromonadales</taxon>
        <taxon>Psychromonadaceae</taxon>
        <taxon>Psychromonas</taxon>
    </lineage>
</organism>
<protein>
    <recommendedName>
        <fullName evidence="1">Glycerol kinase</fullName>
        <ecNumber evidence="1">2.7.1.30</ecNumber>
    </recommendedName>
    <alternativeName>
        <fullName evidence="1">ATP:glycerol 3-phosphotransferase</fullName>
    </alternativeName>
    <alternativeName>
        <fullName evidence="1">Glycerokinase</fullName>
        <shortName evidence="1">GK</shortName>
    </alternativeName>
</protein>
<name>GLPK_PSYIN</name>
<reference key="1">
    <citation type="journal article" date="2008" name="BMC Genomics">
        <title>Genomics of an extreme psychrophile, Psychromonas ingrahamii.</title>
        <authorList>
            <person name="Riley M."/>
            <person name="Staley J.T."/>
            <person name="Danchin A."/>
            <person name="Wang T.Z."/>
            <person name="Brettin T.S."/>
            <person name="Hauser L.J."/>
            <person name="Land M.L."/>
            <person name="Thompson L.S."/>
        </authorList>
    </citation>
    <scope>NUCLEOTIDE SEQUENCE [LARGE SCALE GENOMIC DNA]</scope>
    <source>
        <strain>DSM 17664 / CCUG 51855 / 37</strain>
    </source>
</reference>
<keyword id="KW-0067">ATP-binding</keyword>
<keyword id="KW-0319">Glycerol metabolism</keyword>
<keyword id="KW-0418">Kinase</keyword>
<keyword id="KW-0547">Nucleotide-binding</keyword>
<keyword id="KW-1185">Reference proteome</keyword>
<keyword id="KW-0808">Transferase</keyword>
<sequence length="507" mass="55785">MTDKKYIVALDQGTTSSRAVILDHDANIVSVSQREFKQIYPQAGWVEHDPMELYATQSAVLTEILAKESIRSDQIAAIGITNQRETTIVWNRETGIPVYNAIVWQCRRTASICDALKEQPGLEDYIRENTGLVLDPYFSGTKIKWILDNVEGAREDAEAGKLMFGTVDTWLVWKMTQRHVHVTDYTNASRTMLFNINTLKWDEKLLKILGIPLSMMAEVKSSSEVYGQTNIGGVGGTRIPIAGIAGDQQAALYGHMCVEKGQAKNTYGTGCFLLMNTGKEKVTSSNGLLTTLACGPKGEASYALEGAVFMGGASIQWLRDEMKLLADAKDSEYFATKVDSSNGVYVVPAFTGLGAPYWDPYARGTIVGLTRGVNSNHIIRATLESIAYQTRDVLDAMQADSGIKLSALRVDGGAVANNFLMQFQSDVLDTTVQRPAVSEVTALGAAYLAGLAVGYWESLEELAGKAVIEQTFEPHADPVKRKQRYRGWKRAVKCTQAWAEMHDEDFE</sequence>
<dbReference type="EC" id="2.7.1.30" evidence="1"/>
<dbReference type="EMBL" id="CP000510">
    <property type="protein sequence ID" value="ABM04856.1"/>
    <property type="molecule type" value="Genomic_DNA"/>
</dbReference>
<dbReference type="RefSeq" id="WP_011771410.1">
    <property type="nucleotide sequence ID" value="NC_008709.1"/>
</dbReference>
<dbReference type="SMR" id="A1SZE1"/>
<dbReference type="STRING" id="357804.Ping_3168"/>
<dbReference type="KEGG" id="pin:Ping_3168"/>
<dbReference type="eggNOG" id="COG0554">
    <property type="taxonomic scope" value="Bacteria"/>
</dbReference>
<dbReference type="HOGENOM" id="CLU_009281_2_3_6"/>
<dbReference type="OrthoDB" id="9805576at2"/>
<dbReference type="UniPathway" id="UPA00618">
    <property type="reaction ID" value="UER00672"/>
</dbReference>
<dbReference type="Proteomes" id="UP000000639">
    <property type="component" value="Chromosome"/>
</dbReference>
<dbReference type="GO" id="GO:0005829">
    <property type="term" value="C:cytosol"/>
    <property type="evidence" value="ECO:0007669"/>
    <property type="project" value="TreeGrafter"/>
</dbReference>
<dbReference type="GO" id="GO:0005524">
    <property type="term" value="F:ATP binding"/>
    <property type="evidence" value="ECO:0007669"/>
    <property type="project" value="UniProtKB-UniRule"/>
</dbReference>
<dbReference type="GO" id="GO:0004370">
    <property type="term" value="F:glycerol kinase activity"/>
    <property type="evidence" value="ECO:0000250"/>
    <property type="project" value="UniProtKB"/>
</dbReference>
<dbReference type="GO" id="GO:0019563">
    <property type="term" value="P:glycerol catabolic process"/>
    <property type="evidence" value="ECO:0007669"/>
    <property type="project" value="UniProtKB-UniRule"/>
</dbReference>
<dbReference type="GO" id="GO:0006071">
    <property type="term" value="P:glycerol metabolic process"/>
    <property type="evidence" value="ECO:0000250"/>
    <property type="project" value="UniProtKB"/>
</dbReference>
<dbReference type="GO" id="GO:0006072">
    <property type="term" value="P:glycerol-3-phosphate metabolic process"/>
    <property type="evidence" value="ECO:0007669"/>
    <property type="project" value="InterPro"/>
</dbReference>
<dbReference type="CDD" id="cd07769">
    <property type="entry name" value="ASKHA_NBD_FGGY_GK"/>
    <property type="match status" value="1"/>
</dbReference>
<dbReference type="FunFam" id="3.30.420.40:FF:000007">
    <property type="entry name" value="Glycerol kinase"/>
    <property type="match status" value="1"/>
</dbReference>
<dbReference type="FunFam" id="3.30.420.40:FF:000008">
    <property type="entry name" value="Glycerol kinase"/>
    <property type="match status" value="1"/>
</dbReference>
<dbReference type="Gene3D" id="3.30.420.40">
    <property type="match status" value="2"/>
</dbReference>
<dbReference type="HAMAP" id="MF_00186">
    <property type="entry name" value="Glycerol_kin"/>
    <property type="match status" value="1"/>
</dbReference>
<dbReference type="InterPro" id="IPR043129">
    <property type="entry name" value="ATPase_NBD"/>
</dbReference>
<dbReference type="InterPro" id="IPR000577">
    <property type="entry name" value="Carb_kinase_FGGY"/>
</dbReference>
<dbReference type="InterPro" id="IPR018483">
    <property type="entry name" value="Carb_kinase_FGGY_CS"/>
</dbReference>
<dbReference type="InterPro" id="IPR018485">
    <property type="entry name" value="FGGY_C"/>
</dbReference>
<dbReference type="InterPro" id="IPR018484">
    <property type="entry name" value="FGGY_N"/>
</dbReference>
<dbReference type="InterPro" id="IPR005999">
    <property type="entry name" value="Glycerol_kin"/>
</dbReference>
<dbReference type="NCBIfam" id="TIGR01311">
    <property type="entry name" value="glycerol_kin"/>
    <property type="match status" value="1"/>
</dbReference>
<dbReference type="NCBIfam" id="NF000756">
    <property type="entry name" value="PRK00047.1"/>
    <property type="match status" value="1"/>
</dbReference>
<dbReference type="PANTHER" id="PTHR10196:SF69">
    <property type="entry name" value="GLYCEROL KINASE"/>
    <property type="match status" value="1"/>
</dbReference>
<dbReference type="PANTHER" id="PTHR10196">
    <property type="entry name" value="SUGAR KINASE"/>
    <property type="match status" value="1"/>
</dbReference>
<dbReference type="Pfam" id="PF02782">
    <property type="entry name" value="FGGY_C"/>
    <property type="match status" value="1"/>
</dbReference>
<dbReference type="Pfam" id="PF00370">
    <property type="entry name" value="FGGY_N"/>
    <property type="match status" value="1"/>
</dbReference>
<dbReference type="PIRSF" id="PIRSF000538">
    <property type="entry name" value="GlpK"/>
    <property type="match status" value="1"/>
</dbReference>
<dbReference type="SUPFAM" id="SSF53067">
    <property type="entry name" value="Actin-like ATPase domain"/>
    <property type="match status" value="2"/>
</dbReference>
<dbReference type="PROSITE" id="PS00933">
    <property type="entry name" value="FGGY_KINASES_1"/>
    <property type="match status" value="1"/>
</dbReference>
<dbReference type="PROSITE" id="PS00445">
    <property type="entry name" value="FGGY_KINASES_2"/>
    <property type="match status" value="1"/>
</dbReference>
<accession>A1SZE1</accession>